<accession>Q15WG3</accession>
<name>RS2_PSEA6</name>
<feature type="chain" id="PRO_1000004028" description="Small ribosomal subunit protein uS2">
    <location>
        <begin position="1"/>
        <end position="243"/>
    </location>
</feature>
<protein>
    <recommendedName>
        <fullName evidence="1">Small ribosomal subunit protein uS2</fullName>
    </recommendedName>
    <alternativeName>
        <fullName evidence="2">30S ribosomal protein S2</fullName>
    </alternativeName>
</protein>
<reference key="1">
    <citation type="submission" date="2006-06" db="EMBL/GenBank/DDBJ databases">
        <title>Complete sequence of Pseudoalteromonas atlantica T6c.</title>
        <authorList>
            <consortium name="US DOE Joint Genome Institute"/>
            <person name="Copeland A."/>
            <person name="Lucas S."/>
            <person name="Lapidus A."/>
            <person name="Barry K."/>
            <person name="Detter J.C."/>
            <person name="Glavina del Rio T."/>
            <person name="Hammon N."/>
            <person name="Israni S."/>
            <person name="Dalin E."/>
            <person name="Tice H."/>
            <person name="Pitluck S."/>
            <person name="Saunders E."/>
            <person name="Brettin T."/>
            <person name="Bruce D."/>
            <person name="Han C."/>
            <person name="Tapia R."/>
            <person name="Gilna P."/>
            <person name="Schmutz J."/>
            <person name="Larimer F."/>
            <person name="Land M."/>
            <person name="Hauser L."/>
            <person name="Kyrpides N."/>
            <person name="Kim E."/>
            <person name="Karls A.C."/>
            <person name="Bartlett D."/>
            <person name="Higgins B.P."/>
            <person name="Richardson P."/>
        </authorList>
    </citation>
    <scope>NUCLEOTIDE SEQUENCE [LARGE SCALE GENOMIC DNA]</scope>
    <source>
        <strain>T6c / ATCC BAA-1087</strain>
    </source>
</reference>
<gene>
    <name evidence="1" type="primary">rpsB</name>
    <name type="ordered locus">Patl_1249</name>
</gene>
<evidence type="ECO:0000255" key="1">
    <source>
        <dbReference type="HAMAP-Rule" id="MF_00291"/>
    </source>
</evidence>
<evidence type="ECO:0000305" key="2"/>
<keyword id="KW-0687">Ribonucleoprotein</keyword>
<keyword id="KW-0689">Ribosomal protein</keyword>
<dbReference type="EMBL" id="CP000388">
    <property type="protein sequence ID" value="ABG39775.1"/>
    <property type="molecule type" value="Genomic_DNA"/>
</dbReference>
<dbReference type="RefSeq" id="WP_011574102.1">
    <property type="nucleotide sequence ID" value="NC_008228.1"/>
</dbReference>
<dbReference type="SMR" id="Q15WG3"/>
<dbReference type="STRING" id="342610.Patl_1249"/>
<dbReference type="KEGG" id="pat:Patl_1249"/>
<dbReference type="eggNOG" id="COG0052">
    <property type="taxonomic scope" value="Bacteria"/>
</dbReference>
<dbReference type="HOGENOM" id="CLU_040318_1_2_6"/>
<dbReference type="OrthoDB" id="9808036at2"/>
<dbReference type="Proteomes" id="UP000001981">
    <property type="component" value="Chromosome"/>
</dbReference>
<dbReference type="GO" id="GO:0022627">
    <property type="term" value="C:cytosolic small ribosomal subunit"/>
    <property type="evidence" value="ECO:0007669"/>
    <property type="project" value="TreeGrafter"/>
</dbReference>
<dbReference type="GO" id="GO:0003735">
    <property type="term" value="F:structural constituent of ribosome"/>
    <property type="evidence" value="ECO:0007669"/>
    <property type="project" value="InterPro"/>
</dbReference>
<dbReference type="GO" id="GO:0006412">
    <property type="term" value="P:translation"/>
    <property type="evidence" value="ECO:0007669"/>
    <property type="project" value="UniProtKB-UniRule"/>
</dbReference>
<dbReference type="CDD" id="cd01425">
    <property type="entry name" value="RPS2"/>
    <property type="match status" value="1"/>
</dbReference>
<dbReference type="FunFam" id="1.10.287.610:FF:000001">
    <property type="entry name" value="30S ribosomal protein S2"/>
    <property type="match status" value="1"/>
</dbReference>
<dbReference type="Gene3D" id="3.40.50.10490">
    <property type="entry name" value="Glucose-6-phosphate isomerase like protein, domain 1"/>
    <property type="match status" value="1"/>
</dbReference>
<dbReference type="Gene3D" id="1.10.287.610">
    <property type="entry name" value="Helix hairpin bin"/>
    <property type="match status" value="1"/>
</dbReference>
<dbReference type="HAMAP" id="MF_00291_B">
    <property type="entry name" value="Ribosomal_uS2_B"/>
    <property type="match status" value="1"/>
</dbReference>
<dbReference type="InterPro" id="IPR001865">
    <property type="entry name" value="Ribosomal_uS2"/>
</dbReference>
<dbReference type="InterPro" id="IPR005706">
    <property type="entry name" value="Ribosomal_uS2_bac/mit/plastid"/>
</dbReference>
<dbReference type="InterPro" id="IPR018130">
    <property type="entry name" value="Ribosomal_uS2_CS"/>
</dbReference>
<dbReference type="InterPro" id="IPR023591">
    <property type="entry name" value="Ribosomal_uS2_flav_dom_sf"/>
</dbReference>
<dbReference type="NCBIfam" id="TIGR01011">
    <property type="entry name" value="rpsB_bact"/>
    <property type="match status" value="1"/>
</dbReference>
<dbReference type="PANTHER" id="PTHR12534">
    <property type="entry name" value="30S RIBOSOMAL PROTEIN S2 PROKARYOTIC AND ORGANELLAR"/>
    <property type="match status" value="1"/>
</dbReference>
<dbReference type="PANTHER" id="PTHR12534:SF0">
    <property type="entry name" value="SMALL RIBOSOMAL SUBUNIT PROTEIN US2M"/>
    <property type="match status" value="1"/>
</dbReference>
<dbReference type="Pfam" id="PF00318">
    <property type="entry name" value="Ribosomal_S2"/>
    <property type="match status" value="1"/>
</dbReference>
<dbReference type="PRINTS" id="PR00395">
    <property type="entry name" value="RIBOSOMALS2"/>
</dbReference>
<dbReference type="SUPFAM" id="SSF52313">
    <property type="entry name" value="Ribosomal protein S2"/>
    <property type="match status" value="1"/>
</dbReference>
<dbReference type="PROSITE" id="PS00962">
    <property type="entry name" value="RIBOSOMAL_S2_1"/>
    <property type="match status" value="1"/>
</dbReference>
<dbReference type="PROSITE" id="PS00963">
    <property type="entry name" value="RIBOSOMAL_S2_2"/>
    <property type="match status" value="1"/>
</dbReference>
<proteinExistence type="inferred from homology"/>
<organism>
    <name type="scientific">Pseudoalteromonas atlantica (strain T6c / ATCC BAA-1087)</name>
    <dbReference type="NCBI Taxonomy" id="3042615"/>
    <lineage>
        <taxon>Bacteria</taxon>
        <taxon>Pseudomonadati</taxon>
        <taxon>Pseudomonadota</taxon>
        <taxon>Gammaproteobacteria</taxon>
        <taxon>Alteromonadales</taxon>
        <taxon>Alteromonadaceae</taxon>
        <taxon>Paraglaciecola</taxon>
    </lineage>
</organism>
<sequence>MANVSMRDMLQAGVHFGHQTRYWNPKMKPFIFGARNKVHIINLEKTVPLFNNALNYIGSVASKKGKILFVGTKRAASDSVRDAAVKCDQFYVNKRWLGGMLTNWKTVRQSIKRLKDLEQQSQDGTFDKITKKEVLMLQREMAKLENSLGGIKNMGGLPDCLFVVDADHEHIAITEARNLGIPVVSIVDTNSNPDGVDYIIPGNDDAIRAVQLYLNSAADAVIEGREKNIEVQAEEGEFVEAAE</sequence>
<comment type="similarity">
    <text evidence="1">Belongs to the universal ribosomal protein uS2 family.</text>
</comment>